<organism>
    <name type="scientific">Pantoea agglomerans pv. gypsophilae</name>
    <name type="common">Erwinia herbicola</name>
    <dbReference type="NCBI Taxonomy" id="48984"/>
    <lineage>
        <taxon>Bacteria</taxon>
        <taxon>Pseudomonadati</taxon>
        <taxon>Pseudomonadota</taxon>
        <taxon>Gammaproteobacteria</taxon>
        <taxon>Enterobacterales</taxon>
        <taxon>Erwiniaceae</taxon>
        <taxon>Pantoea</taxon>
        <taxon>Pantoea agglomerans group</taxon>
    </lineage>
</organism>
<accession>Q47851</accession>
<comment type="function">
    <text evidence="1">Transfers dimethylallyl groups to AMP as part of the biosynthesis of cytokinin phytohormones.</text>
</comment>
<comment type="catalytic activity">
    <reaction>
        <text>dimethylallyl diphosphate + AMP = N(6)-(dimethylallyl)adenosine 5'-phosphate + diphosphate</text>
        <dbReference type="Rhea" id="RHEA:15285"/>
        <dbReference type="ChEBI" id="CHEBI:33019"/>
        <dbReference type="ChEBI" id="CHEBI:57526"/>
        <dbReference type="ChEBI" id="CHEBI:57623"/>
        <dbReference type="ChEBI" id="CHEBI:456215"/>
        <dbReference type="EC" id="2.5.1.27"/>
    </reaction>
</comment>
<comment type="similarity">
    <text evidence="2">Belongs to the isopentenyl transferase family.</text>
</comment>
<sequence length="236" mass="27285">MRGNVYLLWGATTTGKTAFSVSVAKERGWSVIALDRFQGYHEISTGSGAPTNNELEKTERIYITPQRGLADGIITAKDYNYWLKSRVLSLPEGKSDFIIEGGSVSLLKEMVSDEFWADFLWEIKIFRAPSKDVFIKRAKRRITDMLHPEDGRPSIMDEVSSFFMNHKTIHPLEDIDGYRTIIDYCRCKKIGFDKLKIMTTDQEKIIISGIAEEYYAHALWQEQETPCFPHSWSRRW</sequence>
<proteinExistence type="inferred from homology"/>
<protein>
    <recommendedName>
        <fullName>Adenylate dimethylallyltransferase</fullName>
        <ecNumber>2.5.1.27</ecNumber>
    </recommendedName>
    <alternativeName>
        <fullName>Dimethylallyl transferase</fullName>
    </alternativeName>
    <alternativeName>
        <fullName>Isopentenyl transferase</fullName>
    </alternativeName>
</protein>
<reference key="1">
    <citation type="journal article" date="1995" name="J. Bacteriol.">
        <title>The genes involved in cytokinin biosynthesis in Erwinia herbicola pv. gypsophilae: characterization and role in gall formation.</title>
        <authorList>
            <person name="Lichter A.L."/>
            <person name="Barash I.B."/>
            <person name="Valinsky L.V."/>
            <person name="Manulis S.M."/>
        </authorList>
    </citation>
    <scope>NUCLEOTIDE SEQUENCE [GENOMIC DNA]</scope>
    <source>
        <strain>EH824-1</strain>
    </source>
</reference>
<keyword id="KW-0203">Cytokinin biosynthesis</keyword>
<keyword id="KW-0808">Transferase</keyword>
<evidence type="ECO:0000250" key="1"/>
<evidence type="ECO:0000305" key="2"/>
<dbReference type="EC" id="2.5.1.27"/>
<dbReference type="EMBL" id="Z46375">
    <property type="protein sequence ID" value="CAA86510.1"/>
    <property type="molecule type" value="Genomic_DNA"/>
</dbReference>
<dbReference type="PIR" id="S48867">
    <property type="entry name" value="S48867"/>
</dbReference>
<dbReference type="SMR" id="Q47851"/>
<dbReference type="GO" id="GO:0009824">
    <property type="term" value="F:AMP dimethylallyltransferase activity"/>
    <property type="evidence" value="ECO:0007669"/>
    <property type="project" value="UniProtKB-EC"/>
</dbReference>
<dbReference type="GO" id="GO:0009691">
    <property type="term" value="P:cytokinin biosynthetic process"/>
    <property type="evidence" value="ECO:0007669"/>
    <property type="project" value="UniProtKB-KW"/>
</dbReference>
<dbReference type="Gene3D" id="1.10.287.890">
    <property type="entry name" value="Crystal structure of tRNA isopentenylpyrophosphate transferase (bh2366) domain"/>
    <property type="match status" value="1"/>
</dbReference>
<dbReference type="Gene3D" id="3.40.50.300">
    <property type="entry name" value="P-loop containing nucleotide triphosphate hydrolases"/>
    <property type="match status" value="1"/>
</dbReference>
<dbReference type="InterPro" id="IPR027417">
    <property type="entry name" value="P-loop_NTPase"/>
</dbReference>
<dbReference type="InterPro" id="IPR002648">
    <property type="entry name" value="Tzs"/>
</dbReference>
<dbReference type="Pfam" id="PF01745">
    <property type="entry name" value="IPT"/>
    <property type="match status" value="1"/>
</dbReference>
<dbReference type="PIRSF" id="PIRSF000507">
    <property type="entry name" value="IPT"/>
    <property type="match status" value="1"/>
</dbReference>
<dbReference type="SUPFAM" id="SSF52540">
    <property type="entry name" value="P-loop containing nucleoside triphosphate hydrolases"/>
    <property type="match status" value="1"/>
</dbReference>
<name>IPT_PANAY</name>
<feature type="chain" id="PRO_0000216438" description="Adenylate dimethylallyltransferase">
    <location>
        <begin position="1"/>
        <end position="236"/>
    </location>
</feature>
<gene>
    <name type="primary">ipt</name>
    <name type="synonym">etz</name>
</gene>